<organism>
    <name type="scientific">Escherichia coli (strain K12 / MC4100 / BW2952)</name>
    <dbReference type="NCBI Taxonomy" id="595496"/>
    <lineage>
        <taxon>Bacteria</taxon>
        <taxon>Pseudomonadati</taxon>
        <taxon>Pseudomonadota</taxon>
        <taxon>Gammaproteobacteria</taxon>
        <taxon>Enterobacterales</taxon>
        <taxon>Enterobacteriaceae</taxon>
        <taxon>Escherichia</taxon>
    </lineage>
</organism>
<evidence type="ECO:0000255" key="1"/>
<evidence type="ECO:0000255" key="2">
    <source>
        <dbReference type="HAMAP-Rule" id="MF_01260"/>
    </source>
</evidence>
<gene>
    <name evidence="2" type="primary">bioH</name>
    <name type="ordered locus">BWG_3103</name>
</gene>
<keyword id="KW-0093">Biotin biosynthesis</keyword>
<keyword id="KW-0963">Cytoplasm</keyword>
<keyword id="KW-0378">Hydrolase</keyword>
<keyword id="KW-0719">Serine esterase</keyword>
<feature type="chain" id="PRO_1000214124" description="Pimeloyl-[acyl-carrier protein] methyl ester esterase">
    <location>
        <begin position="1"/>
        <end position="256"/>
    </location>
</feature>
<feature type="domain" description="AB hydrolase-1" evidence="1">
    <location>
        <begin position="15"/>
        <end position="242"/>
    </location>
</feature>
<feature type="active site" description="Nucleophile" evidence="2">
    <location>
        <position position="82"/>
    </location>
</feature>
<feature type="active site" evidence="2">
    <location>
        <position position="207"/>
    </location>
</feature>
<feature type="active site" evidence="2">
    <location>
        <position position="235"/>
    </location>
</feature>
<feature type="binding site" evidence="2">
    <location>
        <position position="22"/>
    </location>
    <ligand>
        <name>substrate</name>
    </ligand>
</feature>
<feature type="binding site" evidence="2">
    <location>
        <begin position="82"/>
        <end position="83"/>
    </location>
    <ligand>
        <name>substrate</name>
    </ligand>
</feature>
<feature type="binding site" evidence="2">
    <location>
        <begin position="143"/>
        <end position="147"/>
    </location>
    <ligand>
        <name>substrate</name>
    </ligand>
</feature>
<feature type="binding site" evidence="2">
    <location>
        <position position="235"/>
    </location>
    <ligand>
        <name>substrate</name>
    </ligand>
</feature>
<protein>
    <recommendedName>
        <fullName evidence="2">Pimeloyl-[acyl-carrier protein] methyl ester esterase</fullName>
        <ecNumber evidence="2">3.1.1.85</ecNumber>
    </recommendedName>
    <alternativeName>
        <fullName evidence="2">Biotin synthesis protein BioH</fullName>
    </alternativeName>
    <alternativeName>
        <fullName evidence="2">Carboxylesterase BioH</fullName>
    </alternativeName>
</protein>
<comment type="function">
    <text evidence="2">The physiological role of BioH is to remove the methyl group introduced by BioC when the pimeloyl moiety is complete. It allows to synthesize pimeloyl-ACP via the fatty acid synthetic pathway through the hydrolysis of the ester bonds of pimeloyl-ACP esters.</text>
</comment>
<comment type="catalytic activity">
    <reaction evidence="2">
        <text>6-carboxyhexanoyl-[ACP] methyl ester + H2O = 6-carboxyhexanoyl-[ACP] + methanol + H(+)</text>
        <dbReference type="Rhea" id="RHEA:42700"/>
        <dbReference type="Rhea" id="RHEA-COMP:9955"/>
        <dbReference type="Rhea" id="RHEA-COMP:10186"/>
        <dbReference type="ChEBI" id="CHEBI:15377"/>
        <dbReference type="ChEBI" id="CHEBI:15378"/>
        <dbReference type="ChEBI" id="CHEBI:17790"/>
        <dbReference type="ChEBI" id="CHEBI:78846"/>
        <dbReference type="ChEBI" id="CHEBI:82735"/>
        <dbReference type="EC" id="3.1.1.85"/>
    </reaction>
</comment>
<comment type="pathway">
    <text evidence="2">Cofactor biosynthesis; biotin biosynthesis.</text>
</comment>
<comment type="subunit">
    <text evidence="2">Monomer.</text>
</comment>
<comment type="subcellular location">
    <subcellularLocation>
        <location evidence="2">Cytoplasm</location>
    </subcellularLocation>
</comment>
<comment type="similarity">
    <text evidence="2">Belongs to the AB hydrolase superfamily. Carboxylesterase BioH family.</text>
</comment>
<reference key="1">
    <citation type="journal article" date="2009" name="J. Bacteriol.">
        <title>Genomic sequencing reveals regulatory mutations and recombinational events in the widely used MC4100 lineage of Escherichia coli K-12.</title>
        <authorList>
            <person name="Ferenci T."/>
            <person name="Zhou Z."/>
            <person name="Betteridge T."/>
            <person name="Ren Y."/>
            <person name="Liu Y."/>
            <person name="Feng L."/>
            <person name="Reeves P.R."/>
            <person name="Wang L."/>
        </authorList>
    </citation>
    <scope>NUCLEOTIDE SEQUENCE [LARGE SCALE GENOMIC DNA]</scope>
    <source>
        <strain>K12 / MC4100 / BW2952</strain>
    </source>
</reference>
<dbReference type="EC" id="3.1.1.85" evidence="2"/>
<dbReference type="EMBL" id="CP001396">
    <property type="protein sequence ID" value="ACR62115.1"/>
    <property type="molecule type" value="Genomic_DNA"/>
</dbReference>
<dbReference type="RefSeq" id="WP_001060070.1">
    <property type="nucleotide sequence ID" value="NC_012759.1"/>
</dbReference>
<dbReference type="SMR" id="C4ZUR7"/>
<dbReference type="ESTHER" id="ecoli-bioh">
    <property type="family name" value="BioH"/>
</dbReference>
<dbReference type="MEROPS" id="S33.994"/>
<dbReference type="KEGG" id="ebw:BWG_3103"/>
<dbReference type="HOGENOM" id="CLU_020336_12_2_6"/>
<dbReference type="UniPathway" id="UPA00078"/>
<dbReference type="GO" id="GO:0005737">
    <property type="term" value="C:cytoplasm"/>
    <property type="evidence" value="ECO:0007669"/>
    <property type="project" value="UniProtKB-SubCell"/>
</dbReference>
<dbReference type="GO" id="GO:0090499">
    <property type="term" value="F:pimelyl-[acyl-carrier protein] methyl ester esterase activity"/>
    <property type="evidence" value="ECO:0007669"/>
    <property type="project" value="UniProtKB-EC"/>
</dbReference>
<dbReference type="GO" id="GO:0009102">
    <property type="term" value="P:biotin biosynthetic process"/>
    <property type="evidence" value="ECO:0007669"/>
    <property type="project" value="UniProtKB-UniRule"/>
</dbReference>
<dbReference type="FunFam" id="3.40.50.1820:FF:000045">
    <property type="entry name" value="Pimeloyl-[acyl-carrier protein] methyl ester esterase"/>
    <property type="match status" value="1"/>
</dbReference>
<dbReference type="Gene3D" id="3.40.50.1820">
    <property type="entry name" value="alpha/beta hydrolase"/>
    <property type="match status" value="1"/>
</dbReference>
<dbReference type="HAMAP" id="MF_01260">
    <property type="entry name" value="Carboxylester"/>
    <property type="match status" value="1"/>
</dbReference>
<dbReference type="InterPro" id="IPR000073">
    <property type="entry name" value="AB_hydrolase_1"/>
</dbReference>
<dbReference type="InterPro" id="IPR029058">
    <property type="entry name" value="AB_hydrolase_fold"/>
</dbReference>
<dbReference type="InterPro" id="IPR010076">
    <property type="entry name" value="BioH"/>
</dbReference>
<dbReference type="InterPro" id="IPR050228">
    <property type="entry name" value="Carboxylesterase_BioH"/>
</dbReference>
<dbReference type="NCBIfam" id="TIGR01738">
    <property type="entry name" value="bioH"/>
    <property type="match status" value="1"/>
</dbReference>
<dbReference type="NCBIfam" id="NF007674">
    <property type="entry name" value="PRK10349.1"/>
    <property type="match status" value="1"/>
</dbReference>
<dbReference type="PANTHER" id="PTHR43194">
    <property type="entry name" value="HYDROLASE ALPHA/BETA FOLD FAMILY"/>
    <property type="match status" value="1"/>
</dbReference>
<dbReference type="PANTHER" id="PTHR43194:SF5">
    <property type="entry name" value="PIMELOYL-[ACYL-CARRIER PROTEIN] METHYL ESTER ESTERASE"/>
    <property type="match status" value="1"/>
</dbReference>
<dbReference type="Pfam" id="PF00561">
    <property type="entry name" value="Abhydrolase_1"/>
    <property type="match status" value="1"/>
</dbReference>
<dbReference type="SUPFAM" id="SSF53474">
    <property type="entry name" value="alpha/beta-Hydrolases"/>
    <property type="match status" value="1"/>
</dbReference>
<proteinExistence type="inferred from homology"/>
<accession>C4ZUR7</accession>
<name>BIOH_ECOBW</name>
<sequence length="256" mass="28505">MNNIWWQTKGQGNVHLVLLHGWGLNAEVWRCIDEELSSHFTLHLVDLPGFGRSRGFGALSLADMAEAVLQQAPDKAIWLGWSLGGLVASQIALTHPERVQALVTVASSPCFSARDEWPGIKPDVLAGFQQQLSDDFQRTVERFLALQTMGTETARQDARALKKTVLALPMPEVDVLNGGLEILKTVDLRQPLQNVSMPFLRLYGYLDGLVPRKVVPMLDKLWPHSESYIFAKAAHAPFISHPAEFCHLLVALKQRV</sequence>